<dbReference type="EC" id="3.1.1.29" evidence="1"/>
<dbReference type="EMBL" id="CP000863">
    <property type="protein sequence ID" value="ACC56097.1"/>
    <property type="molecule type" value="Genomic_DNA"/>
</dbReference>
<dbReference type="RefSeq" id="WP_000065594.1">
    <property type="nucleotide sequence ID" value="NZ_CP031380.1"/>
</dbReference>
<dbReference type="SMR" id="B2HUM2"/>
<dbReference type="KEGG" id="abc:ACICU_00785"/>
<dbReference type="HOGENOM" id="CLU_062456_3_1_6"/>
<dbReference type="Proteomes" id="UP000008839">
    <property type="component" value="Chromosome"/>
</dbReference>
<dbReference type="GO" id="GO:0005737">
    <property type="term" value="C:cytoplasm"/>
    <property type="evidence" value="ECO:0007669"/>
    <property type="project" value="UniProtKB-SubCell"/>
</dbReference>
<dbReference type="GO" id="GO:0004045">
    <property type="term" value="F:peptidyl-tRNA hydrolase activity"/>
    <property type="evidence" value="ECO:0007669"/>
    <property type="project" value="UniProtKB-UniRule"/>
</dbReference>
<dbReference type="GO" id="GO:0000049">
    <property type="term" value="F:tRNA binding"/>
    <property type="evidence" value="ECO:0007669"/>
    <property type="project" value="UniProtKB-UniRule"/>
</dbReference>
<dbReference type="GO" id="GO:0006515">
    <property type="term" value="P:protein quality control for misfolded or incompletely synthesized proteins"/>
    <property type="evidence" value="ECO:0007669"/>
    <property type="project" value="UniProtKB-UniRule"/>
</dbReference>
<dbReference type="GO" id="GO:0072344">
    <property type="term" value="P:rescue of stalled ribosome"/>
    <property type="evidence" value="ECO:0007669"/>
    <property type="project" value="UniProtKB-UniRule"/>
</dbReference>
<dbReference type="CDD" id="cd00462">
    <property type="entry name" value="PTH"/>
    <property type="match status" value="1"/>
</dbReference>
<dbReference type="FunFam" id="3.40.50.1470:FF:000001">
    <property type="entry name" value="Peptidyl-tRNA hydrolase"/>
    <property type="match status" value="1"/>
</dbReference>
<dbReference type="Gene3D" id="3.40.50.1470">
    <property type="entry name" value="Peptidyl-tRNA hydrolase"/>
    <property type="match status" value="1"/>
</dbReference>
<dbReference type="HAMAP" id="MF_00083">
    <property type="entry name" value="Pept_tRNA_hydro_bact"/>
    <property type="match status" value="1"/>
</dbReference>
<dbReference type="InterPro" id="IPR001328">
    <property type="entry name" value="Pept_tRNA_hydro"/>
</dbReference>
<dbReference type="InterPro" id="IPR018171">
    <property type="entry name" value="Pept_tRNA_hydro_CS"/>
</dbReference>
<dbReference type="InterPro" id="IPR036416">
    <property type="entry name" value="Pept_tRNA_hydro_sf"/>
</dbReference>
<dbReference type="NCBIfam" id="TIGR00447">
    <property type="entry name" value="pth"/>
    <property type="match status" value="1"/>
</dbReference>
<dbReference type="PANTHER" id="PTHR17224">
    <property type="entry name" value="PEPTIDYL-TRNA HYDROLASE"/>
    <property type="match status" value="1"/>
</dbReference>
<dbReference type="PANTHER" id="PTHR17224:SF1">
    <property type="entry name" value="PEPTIDYL-TRNA HYDROLASE"/>
    <property type="match status" value="1"/>
</dbReference>
<dbReference type="Pfam" id="PF01195">
    <property type="entry name" value="Pept_tRNA_hydro"/>
    <property type="match status" value="1"/>
</dbReference>
<dbReference type="SUPFAM" id="SSF53178">
    <property type="entry name" value="Peptidyl-tRNA hydrolase-like"/>
    <property type="match status" value="1"/>
</dbReference>
<dbReference type="PROSITE" id="PS01195">
    <property type="entry name" value="PEPT_TRNA_HYDROL_1"/>
    <property type="match status" value="1"/>
</dbReference>
<dbReference type="PROSITE" id="PS01196">
    <property type="entry name" value="PEPT_TRNA_HYDROL_2"/>
    <property type="match status" value="1"/>
</dbReference>
<sequence length="193" mass="20911">MSNISLIVGLGNPGSEYAQTRHNAGFWFVEQLADKYGITLKNDPKFHGISGRGNIEGHDVRLLLPMTYMNRSGQSVVPFSKFYQIAPEAILIAHDELDMNPGVIRLKTGGGHGGHNGLRDIVPHIGPNFHRLRIGIGHPGSKERVSGHVLGKAPSSEQSLMDGAIDHALSKVKLLVQGQVPQAMNQINAYKPA</sequence>
<reference key="1">
    <citation type="journal article" date="2008" name="Antimicrob. Agents Chemother.">
        <title>Whole-genome pyrosequencing of an epidemic multidrug-resistant Acinetobacter baumannii strain belonging to the European clone II group.</title>
        <authorList>
            <person name="Iacono M."/>
            <person name="Villa L."/>
            <person name="Fortini D."/>
            <person name="Bordoni R."/>
            <person name="Imperi F."/>
            <person name="Bonnal R.J."/>
            <person name="Sicheritz-Ponten T."/>
            <person name="De Bellis G."/>
            <person name="Visca P."/>
            <person name="Cassone A."/>
            <person name="Carattoli A."/>
        </authorList>
    </citation>
    <scope>NUCLEOTIDE SEQUENCE [LARGE SCALE GENOMIC DNA]</scope>
    <source>
        <strain>ACICU</strain>
    </source>
</reference>
<protein>
    <recommendedName>
        <fullName evidence="1">Peptidyl-tRNA hydrolase</fullName>
        <shortName evidence="1">Pth</shortName>
        <ecNumber evidence="1">3.1.1.29</ecNumber>
    </recommendedName>
</protein>
<comment type="function">
    <text evidence="1">Hydrolyzes ribosome-free peptidyl-tRNAs (with 1 or more amino acids incorporated), which drop off the ribosome during protein synthesis, or as a result of ribosome stalling.</text>
</comment>
<comment type="function">
    <text evidence="1">Catalyzes the release of premature peptidyl moieties from peptidyl-tRNA molecules trapped in stalled 50S ribosomal subunits, and thus maintains levels of free tRNAs and 50S ribosomes.</text>
</comment>
<comment type="catalytic activity">
    <reaction evidence="1">
        <text>an N-acyl-L-alpha-aminoacyl-tRNA + H2O = an N-acyl-L-amino acid + a tRNA + H(+)</text>
        <dbReference type="Rhea" id="RHEA:54448"/>
        <dbReference type="Rhea" id="RHEA-COMP:10123"/>
        <dbReference type="Rhea" id="RHEA-COMP:13883"/>
        <dbReference type="ChEBI" id="CHEBI:15377"/>
        <dbReference type="ChEBI" id="CHEBI:15378"/>
        <dbReference type="ChEBI" id="CHEBI:59874"/>
        <dbReference type="ChEBI" id="CHEBI:78442"/>
        <dbReference type="ChEBI" id="CHEBI:138191"/>
        <dbReference type="EC" id="3.1.1.29"/>
    </reaction>
</comment>
<comment type="subunit">
    <text evidence="1">Monomer.</text>
</comment>
<comment type="subcellular location">
    <subcellularLocation>
        <location evidence="1">Cytoplasm</location>
    </subcellularLocation>
</comment>
<comment type="similarity">
    <text evidence="1">Belongs to the PTH family.</text>
</comment>
<keyword id="KW-0963">Cytoplasm</keyword>
<keyword id="KW-0378">Hydrolase</keyword>
<keyword id="KW-0694">RNA-binding</keyword>
<keyword id="KW-0820">tRNA-binding</keyword>
<gene>
    <name evidence="1" type="primary">pth</name>
    <name type="ordered locus">ACICU_00785</name>
</gene>
<name>PTH_ACIBC</name>
<organism>
    <name type="scientific">Acinetobacter baumannii (strain ACICU)</name>
    <dbReference type="NCBI Taxonomy" id="405416"/>
    <lineage>
        <taxon>Bacteria</taxon>
        <taxon>Pseudomonadati</taxon>
        <taxon>Pseudomonadota</taxon>
        <taxon>Gammaproteobacteria</taxon>
        <taxon>Moraxellales</taxon>
        <taxon>Moraxellaceae</taxon>
        <taxon>Acinetobacter</taxon>
        <taxon>Acinetobacter calcoaceticus/baumannii complex</taxon>
    </lineage>
</organism>
<feature type="chain" id="PRO_1000092897" description="Peptidyl-tRNA hydrolase">
    <location>
        <begin position="1"/>
        <end position="193"/>
    </location>
</feature>
<feature type="active site" description="Proton acceptor" evidence="1">
    <location>
        <position position="22"/>
    </location>
</feature>
<feature type="binding site" evidence="1">
    <location>
        <position position="17"/>
    </location>
    <ligand>
        <name>tRNA</name>
        <dbReference type="ChEBI" id="CHEBI:17843"/>
    </ligand>
</feature>
<feature type="binding site" evidence="1">
    <location>
        <position position="68"/>
    </location>
    <ligand>
        <name>tRNA</name>
        <dbReference type="ChEBI" id="CHEBI:17843"/>
    </ligand>
</feature>
<feature type="binding site" evidence="1">
    <location>
        <position position="70"/>
    </location>
    <ligand>
        <name>tRNA</name>
        <dbReference type="ChEBI" id="CHEBI:17843"/>
    </ligand>
</feature>
<feature type="binding site" evidence="1">
    <location>
        <position position="116"/>
    </location>
    <ligand>
        <name>tRNA</name>
        <dbReference type="ChEBI" id="CHEBI:17843"/>
    </ligand>
</feature>
<feature type="site" description="Discriminates between blocked and unblocked aminoacyl-tRNA" evidence="1">
    <location>
        <position position="12"/>
    </location>
</feature>
<feature type="site" description="Stabilizes the basic form of H active site to accept a proton" evidence="1">
    <location>
        <position position="95"/>
    </location>
</feature>
<proteinExistence type="inferred from homology"/>
<evidence type="ECO:0000255" key="1">
    <source>
        <dbReference type="HAMAP-Rule" id="MF_00083"/>
    </source>
</evidence>
<accession>B2HUM2</accession>